<reference key="1">
    <citation type="submission" date="2008-05" db="EMBL/GenBank/DDBJ databases">
        <title>Complete genome sequence of Clostridium botulinum E3 str. Alaska E43.</title>
        <authorList>
            <person name="Brinkac L.M."/>
            <person name="Brown J.L."/>
            <person name="Bruce D."/>
            <person name="Detter C."/>
            <person name="Munk C."/>
            <person name="Smith L.A."/>
            <person name="Smith T.J."/>
            <person name="Sutton G."/>
            <person name="Brettin T.S."/>
        </authorList>
    </citation>
    <scope>NUCLEOTIDE SEQUENCE [LARGE SCALE GENOMIC DNA]</scope>
    <source>
        <strain>Alaska E43 / Type E3</strain>
    </source>
</reference>
<gene>
    <name evidence="1" type="primary">miaA</name>
    <name type="ordered locus">CLH_1690</name>
</gene>
<evidence type="ECO:0000255" key="1">
    <source>
        <dbReference type="HAMAP-Rule" id="MF_00185"/>
    </source>
</evidence>
<sequence length="309" mass="35662">MKQKILVLGGPTAVGKTELSIKLAEKLNGEIISADSMQIYKNMDIGSAKVTKEEMRDINHHMIDIVSPEEEFSVADFKNIGEKAIKEIIAKEKLPMIVGGTGLYINSLTCNVTFTESEKDDEYRTYLESLAEANGNNYVHEMLKEIDEISYRDIHPNNRKRVIRALEVFKISGKPFSSYNVGDDFYKTDYDVFYYVLTMDREKLYNRINKRVDIMIENGLIDECIELKKLGYTSSMQSMQGIGYKEILYYLDKKISLDEAVNLIKQGSRNYAKRQLTWFRRDPRCTFLDKDVLSDEEILSKIIDDITNN</sequence>
<feature type="chain" id="PRO_1000098655" description="tRNA dimethylallyltransferase">
    <location>
        <begin position="1"/>
        <end position="309"/>
    </location>
</feature>
<feature type="region of interest" description="Interaction with substrate tRNA" evidence="1">
    <location>
        <begin position="35"/>
        <end position="38"/>
    </location>
</feature>
<feature type="binding site" evidence="1">
    <location>
        <begin position="10"/>
        <end position="17"/>
    </location>
    <ligand>
        <name>ATP</name>
        <dbReference type="ChEBI" id="CHEBI:30616"/>
    </ligand>
</feature>
<feature type="binding site" evidence="1">
    <location>
        <begin position="12"/>
        <end position="17"/>
    </location>
    <ligand>
        <name>substrate</name>
    </ligand>
</feature>
<feature type="site" description="Interaction with substrate tRNA" evidence="1">
    <location>
        <position position="101"/>
    </location>
</feature>
<feature type="site" description="Interaction with substrate tRNA" evidence="1">
    <location>
        <position position="124"/>
    </location>
</feature>
<comment type="function">
    <text evidence="1">Catalyzes the transfer of a dimethylallyl group onto the adenine at position 37 in tRNAs that read codons beginning with uridine, leading to the formation of N6-(dimethylallyl)adenosine (i(6)A).</text>
</comment>
<comment type="catalytic activity">
    <reaction evidence="1">
        <text>adenosine(37) in tRNA + dimethylallyl diphosphate = N(6)-dimethylallyladenosine(37) in tRNA + diphosphate</text>
        <dbReference type="Rhea" id="RHEA:26482"/>
        <dbReference type="Rhea" id="RHEA-COMP:10162"/>
        <dbReference type="Rhea" id="RHEA-COMP:10375"/>
        <dbReference type="ChEBI" id="CHEBI:33019"/>
        <dbReference type="ChEBI" id="CHEBI:57623"/>
        <dbReference type="ChEBI" id="CHEBI:74411"/>
        <dbReference type="ChEBI" id="CHEBI:74415"/>
        <dbReference type="EC" id="2.5.1.75"/>
    </reaction>
</comment>
<comment type="cofactor">
    <cofactor evidence="1">
        <name>Mg(2+)</name>
        <dbReference type="ChEBI" id="CHEBI:18420"/>
    </cofactor>
</comment>
<comment type="subunit">
    <text evidence="1">Monomer.</text>
</comment>
<comment type="similarity">
    <text evidence="1">Belongs to the IPP transferase family.</text>
</comment>
<dbReference type="EC" id="2.5.1.75" evidence="1"/>
<dbReference type="EMBL" id="CP001078">
    <property type="protein sequence ID" value="ACD51712.1"/>
    <property type="molecule type" value="Genomic_DNA"/>
</dbReference>
<dbReference type="RefSeq" id="WP_012450019.1">
    <property type="nucleotide sequence ID" value="NC_010723.1"/>
</dbReference>
<dbReference type="SMR" id="B2V267"/>
<dbReference type="KEGG" id="cbt:CLH_1690"/>
<dbReference type="HOGENOM" id="CLU_032616_0_1_9"/>
<dbReference type="GO" id="GO:0005524">
    <property type="term" value="F:ATP binding"/>
    <property type="evidence" value="ECO:0007669"/>
    <property type="project" value="UniProtKB-UniRule"/>
</dbReference>
<dbReference type="GO" id="GO:0052381">
    <property type="term" value="F:tRNA dimethylallyltransferase activity"/>
    <property type="evidence" value="ECO:0007669"/>
    <property type="project" value="UniProtKB-UniRule"/>
</dbReference>
<dbReference type="GO" id="GO:0006400">
    <property type="term" value="P:tRNA modification"/>
    <property type="evidence" value="ECO:0007669"/>
    <property type="project" value="TreeGrafter"/>
</dbReference>
<dbReference type="FunFam" id="1.10.20.140:FF:000001">
    <property type="entry name" value="tRNA dimethylallyltransferase"/>
    <property type="match status" value="1"/>
</dbReference>
<dbReference type="Gene3D" id="1.10.20.140">
    <property type="match status" value="1"/>
</dbReference>
<dbReference type="Gene3D" id="3.40.50.300">
    <property type="entry name" value="P-loop containing nucleotide triphosphate hydrolases"/>
    <property type="match status" value="1"/>
</dbReference>
<dbReference type="HAMAP" id="MF_00185">
    <property type="entry name" value="IPP_trans"/>
    <property type="match status" value="1"/>
</dbReference>
<dbReference type="InterPro" id="IPR039657">
    <property type="entry name" value="Dimethylallyltransferase"/>
</dbReference>
<dbReference type="InterPro" id="IPR018022">
    <property type="entry name" value="IPT"/>
</dbReference>
<dbReference type="InterPro" id="IPR027417">
    <property type="entry name" value="P-loop_NTPase"/>
</dbReference>
<dbReference type="NCBIfam" id="TIGR00174">
    <property type="entry name" value="miaA"/>
    <property type="match status" value="1"/>
</dbReference>
<dbReference type="PANTHER" id="PTHR11088">
    <property type="entry name" value="TRNA DIMETHYLALLYLTRANSFERASE"/>
    <property type="match status" value="1"/>
</dbReference>
<dbReference type="PANTHER" id="PTHR11088:SF60">
    <property type="entry name" value="TRNA DIMETHYLALLYLTRANSFERASE"/>
    <property type="match status" value="1"/>
</dbReference>
<dbReference type="Pfam" id="PF01715">
    <property type="entry name" value="IPPT"/>
    <property type="match status" value="1"/>
</dbReference>
<dbReference type="SUPFAM" id="SSF52540">
    <property type="entry name" value="P-loop containing nucleoside triphosphate hydrolases"/>
    <property type="match status" value="2"/>
</dbReference>
<name>MIAA_CLOBA</name>
<organism>
    <name type="scientific">Clostridium botulinum (strain Alaska E43 / Type E3)</name>
    <dbReference type="NCBI Taxonomy" id="508767"/>
    <lineage>
        <taxon>Bacteria</taxon>
        <taxon>Bacillati</taxon>
        <taxon>Bacillota</taxon>
        <taxon>Clostridia</taxon>
        <taxon>Eubacteriales</taxon>
        <taxon>Clostridiaceae</taxon>
        <taxon>Clostridium</taxon>
    </lineage>
</organism>
<proteinExistence type="inferred from homology"/>
<accession>B2V267</accession>
<keyword id="KW-0067">ATP-binding</keyword>
<keyword id="KW-0460">Magnesium</keyword>
<keyword id="KW-0547">Nucleotide-binding</keyword>
<keyword id="KW-0808">Transferase</keyword>
<keyword id="KW-0819">tRNA processing</keyword>
<protein>
    <recommendedName>
        <fullName evidence="1">tRNA dimethylallyltransferase</fullName>
        <ecNumber evidence="1">2.5.1.75</ecNumber>
    </recommendedName>
    <alternativeName>
        <fullName evidence="1">Dimethylallyl diphosphate:tRNA dimethylallyltransferase</fullName>
        <shortName evidence="1">DMAPP:tRNA dimethylallyltransferase</shortName>
        <shortName evidence="1">DMATase</shortName>
    </alternativeName>
    <alternativeName>
        <fullName evidence="1">Isopentenyl-diphosphate:tRNA isopentenyltransferase</fullName>
        <shortName evidence="1">IPP transferase</shortName>
        <shortName evidence="1">IPPT</shortName>
        <shortName evidence="1">IPTase</shortName>
    </alternativeName>
</protein>